<geneLocation type="mitochondrion" evidence="4"/>
<gene>
    <name evidence="1" type="primary">mt:CoIII</name>
    <name evidence="4" type="synonym">COX3</name>
</gene>
<name>COX3_AEDAE</name>
<feature type="chain" id="PRO_0000372685" description="Cytochrome c oxidase subunit 3">
    <location>
        <begin position="1"/>
        <end position="262"/>
    </location>
</feature>
<feature type="transmembrane region" description="Helical" evidence="3">
    <location>
        <begin position="16"/>
        <end position="36"/>
    </location>
</feature>
<feature type="transmembrane region" description="Helical" evidence="3">
    <location>
        <begin position="42"/>
        <end position="59"/>
    </location>
</feature>
<feature type="transmembrane region" description="Helical" evidence="3">
    <location>
        <begin position="83"/>
        <end position="103"/>
    </location>
</feature>
<feature type="transmembrane region" description="Helical" evidence="3">
    <location>
        <begin position="128"/>
        <end position="148"/>
    </location>
</feature>
<feature type="transmembrane region" description="Helical" evidence="3">
    <location>
        <begin position="163"/>
        <end position="183"/>
    </location>
</feature>
<feature type="transmembrane region" description="Helical" evidence="3">
    <location>
        <begin position="198"/>
        <end position="218"/>
    </location>
</feature>
<feature type="transmembrane region" description="Helical" evidence="3">
    <location>
        <begin position="240"/>
        <end position="260"/>
    </location>
</feature>
<reference evidence="4" key="1">
    <citation type="submission" date="2007-12" db="EMBL/GenBank/DDBJ databases">
        <title>The mitochondrial genome of the Yellow fever mosquito - Aedes aegypti.</title>
        <authorList>
            <person name="Lobo N.F."/>
            <person name="Lovin D."/>
            <person name="DeBruyn B."/>
            <person name="Puiu D."/>
            <person name="Shumway M."/>
            <person name="Haas B."/>
            <person name="Nene V."/>
            <person name="Severson D.W."/>
        </authorList>
    </citation>
    <scope>NUCLEOTIDE SEQUENCE [LARGE SCALE GENOMIC DNA]</scope>
    <source>
        <strain evidence="4">LVPib12</strain>
    </source>
</reference>
<protein>
    <recommendedName>
        <fullName>Cytochrome c oxidase subunit 3</fullName>
        <ecNumber>7.1.1.9</ecNumber>
    </recommendedName>
    <alternativeName>
        <fullName>Cytochrome c oxidase polypeptide III</fullName>
    </alternativeName>
</protein>
<organism>
    <name type="scientific">Aedes aegypti</name>
    <name type="common">Yellowfever mosquito</name>
    <name type="synonym">Culex aegypti</name>
    <dbReference type="NCBI Taxonomy" id="7159"/>
    <lineage>
        <taxon>Eukaryota</taxon>
        <taxon>Metazoa</taxon>
        <taxon>Ecdysozoa</taxon>
        <taxon>Arthropoda</taxon>
        <taxon>Hexapoda</taxon>
        <taxon>Insecta</taxon>
        <taxon>Pterygota</taxon>
        <taxon>Neoptera</taxon>
        <taxon>Endopterygota</taxon>
        <taxon>Diptera</taxon>
        <taxon>Nematocera</taxon>
        <taxon>Culicoidea</taxon>
        <taxon>Culicidae</taxon>
        <taxon>Culicinae</taxon>
        <taxon>Aedini</taxon>
        <taxon>Aedes</taxon>
        <taxon>Stegomyia</taxon>
    </lineage>
</organism>
<proteinExistence type="inferred from homology"/>
<comment type="function">
    <text evidence="2">Component of the cytochrome c oxidase, the last enzyme in the mitochondrial electron transport chain which drives oxidative phosphorylation. The respiratory chain contains 3 multisubunit complexes succinate dehydrogenase (complex II, CII), ubiquinol-cytochrome c oxidoreductase (cytochrome b-c1 complex, complex III, CIII) and cytochrome c oxidase (complex IV, CIV), that cooperate to transfer electrons derived from NADH and succinate to molecular oxygen, creating an electrochemical gradient over the inner membrane that drives transmembrane transport and the ATP synthase. Cytochrome c oxidase is the component of the respiratory chain that catalyzes the reduction of oxygen to water. Electrons originating from reduced cytochrome c in the intermembrane space (IMS) are transferred via the dinuclear copper A center (CU(A)) of subunit 2 and heme A of subunit 1 to the active site in subunit 1, a binuclear center (BNC) formed by heme A3 and copper B (CU(B)). The BNC reduces molecular oxygen to 2 water molecules using 4 electrons from cytochrome c in the IMS and 4 protons from the mitochondrial matrix.</text>
</comment>
<comment type="catalytic activity">
    <reaction evidence="2">
        <text>4 Fe(II)-[cytochrome c] + O2 + 8 H(+)(in) = 4 Fe(III)-[cytochrome c] + 2 H2O + 4 H(+)(out)</text>
        <dbReference type="Rhea" id="RHEA:11436"/>
        <dbReference type="Rhea" id="RHEA-COMP:10350"/>
        <dbReference type="Rhea" id="RHEA-COMP:14399"/>
        <dbReference type="ChEBI" id="CHEBI:15377"/>
        <dbReference type="ChEBI" id="CHEBI:15378"/>
        <dbReference type="ChEBI" id="CHEBI:15379"/>
        <dbReference type="ChEBI" id="CHEBI:29033"/>
        <dbReference type="ChEBI" id="CHEBI:29034"/>
        <dbReference type="EC" id="7.1.1.9"/>
    </reaction>
    <physiologicalReaction direction="left-to-right" evidence="2">
        <dbReference type="Rhea" id="RHEA:11437"/>
    </physiologicalReaction>
</comment>
<comment type="subunit">
    <text evidence="2">Component of the cytochrome c oxidase (complex IV, CIV), a multisubunit enzyme composed of a catalytic core of 3 subunits and several supernumerary subunits. The complex exists as a monomer or a dimer and forms supercomplexes (SCs) in the inner mitochondrial membrane with ubiquinol-cytochrome c oxidoreductase (cytochrome b-c1 complex, complex III, CIII).</text>
</comment>
<comment type="subcellular location">
    <subcellularLocation>
        <location evidence="2">Mitochondrion inner membrane</location>
        <topology evidence="2">Multi-pass membrane protein</topology>
    </subcellularLocation>
</comment>
<comment type="similarity">
    <text evidence="3">Belongs to the cytochrome c oxidase subunit 3 family.</text>
</comment>
<accession>B0FWD1</accession>
<keyword id="KW-0472">Membrane</keyword>
<keyword id="KW-0496">Mitochondrion</keyword>
<keyword id="KW-0999">Mitochondrion inner membrane</keyword>
<keyword id="KW-1185">Reference proteome</keyword>
<keyword id="KW-1278">Translocase</keyword>
<keyword id="KW-0812">Transmembrane</keyword>
<keyword id="KW-1133">Transmembrane helix</keyword>
<sequence>MSTHANHPFHLVDYSPWPLTGAIGAMTTVTGLVQWFHQYDNTLFLLGNIITMLTMYQWWRDISREGTFQGLHTIPVTLGLRWGMILFIISEVFFFISFFWAFFHSSLSPTIELGMVWPPIGIEPFNPFQIPLLNTAILLASGVTVTWAHHSLMENNHTQTIQSLFFTVLLGIYFSILQAYEYIEAPFTIADNVYGSTFFVATGFHGLHVLIGTSFLLICLFRHMNCHFSSSHHFGFEAAAWYWHFVDVVWLFLYISIYWWGN</sequence>
<dbReference type="EC" id="7.1.1.9"/>
<dbReference type="EMBL" id="EU352212">
    <property type="protein sequence ID" value="ABY51628.1"/>
    <property type="molecule type" value="Genomic_DNA"/>
</dbReference>
<dbReference type="RefSeq" id="YP_001649167.1">
    <property type="nucleotide sequence ID" value="NC_010241.1"/>
</dbReference>
<dbReference type="SMR" id="B0FWD1"/>
<dbReference type="FunCoup" id="B0FWD1">
    <property type="interactions" value="208"/>
</dbReference>
<dbReference type="STRING" id="7159.B0FWD1"/>
<dbReference type="PaxDb" id="7159-AAEL018669-PA"/>
<dbReference type="EnsemblMetazoa" id="AAEL018669-RA">
    <property type="protein sequence ID" value="AAEL018669-PA"/>
    <property type="gene ID" value="AAEL018669"/>
</dbReference>
<dbReference type="VEuPathDB" id="VectorBase:AAEL018669"/>
<dbReference type="eggNOG" id="KOG4664">
    <property type="taxonomic scope" value="Eukaryota"/>
</dbReference>
<dbReference type="HOGENOM" id="CLU_044071_0_0_1"/>
<dbReference type="InParanoid" id="B0FWD1"/>
<dbReference type="OrthoDB" id="10050457at2759"/>
<dbReference type="Proteomes" id="UP000008820">
    <property type="component" value="Mitochondrion MT"/>
</dbReference>
<dbReference type="Proteomes" id="UP000682892">
    <property type="component" value="Mitochondrion MT"/>
</dbReference>
<dbReference type="GO" id="GO:0005743">
    <property type="term" value="C:mitochondrial inner membrane"/>
    <property type="evidence" value="ECO:0007669"/>
    <property type="project" value="UniProtKB-SubCell"/>
</dbReference>
<dbReference type="GO" id="GO:0004129">
    <property type="term" value="F:cytochrome-c oxidase activity"/>
    <property type="evidence" value="ECO:0007669"/>
    <property type="project" value="UniProtKB-EC"/>
</dbReference>
<dbReference type="GO" id="GO:0006123">
    <property type="term" value="P:mitochondrial electron transport, cytochrome c to oxygen"/>
    <property type="evidence" value="ECO:0007669"/>
    <property type="project" value="TreeGrafter"/>
</dbReference>
<dbReference type="CDD" id="cd01665">
    <property type="entry name" value="Cyt_c_Oxidase_III"/>
    <property type="match status" value="1"/>
</dbReference>
<dbReference type="FunFam" id="1.10.287.70:FF:000048">
    <property type="entry name" value="Cytochrome c oxidase subunit 3"/>
    <property type="match status" value="1"/>
</dbReference>
<dbReference type="FunFam" id="1.20.120.80:FF:000002">
    <property type="entry name" value="Cytochrome c oxidase subunit 3"/>
    <property type="match status" value="1"/>
</dbReference>
<dbReference type="Gene3D" id="1.10.287.70">
    <property type="match status" value="1"/>
</dbReference>
<dbReference type="Gene3D" id="1.20.120.80">
    <property type="entry name" value="Cytochrome c oxidase, subunit III, four-helix bundle"/>
    <property type="match status" value="1"/>
</dbReference>
<dbReference type="InterPro" id="IPR024791">
    <property type="entry name" value="Cyt_c/ubiquinol_Oxase_su3"/>
</dbReference>
<dbReference type="InterPro" id="IPR033945">
    <property type="entry name" value="Cyt_c_oxase_su3_dom"/>
</dbReference>
<dbReference type="InterPro" id="IPR000298">
    <property type="entry name" value="Cyt_c_oxidase-like_su3"/>
</dbReference>
<dbReference type="InterPro" id="IPR035973">
    <property type="entry name" value="Cyt_c_oxidase_su3-like_sf"/>
</dbReference>
<dbReference type="InterPro" id="IPR013833">
    <property type="entry name" value="Cyt_c_oxidase_su3_a-hlx"/>
</dbReference>
<dbReference type="PANTHER" id="PTHR11403:SF7">
    <property type="entry name" value="CYTOCHROME C OXIDASE SUBUNIT 3"/>
    <property type="match status" value="1"/>
</dbReference>
<dbReference type="PANTHER" id="PTHR11403">
    <property type="entry name" value="CYTOCHROME C OXIDASE SUBUNIT III"/>
    <property type="match status" value="1"/>
</dbReference>
<dbReference type="Pfam" id="PF00510">
    <property type="entry name" value="COX3"/>
    <property type="match status" value="1"/>
</dbReference>
<dbReference type="SUPFAM" id="SSF81452">
    <property type="entry name" value="Cytochrome c oxidase subunit III-like"/>
    <property type="match status" value="1"/>
</dbReference>
<dbReference type="PROSITE" id="PS50253">
    <property type="entry name" value="COX3"/>
    <property type="match status" value="1"/>
</dbReference>
<evidence type="ECO:0000250" key="1">
    <source>
        <dbReference type="UniProtKB" id="P00417"/>
    </source>
</evidence>
<evidence type="ECO:0000250" key="2">
    <source>
        <dbReference type="UniProtKB" id="P00420"/>
    </source>
</evidence>
<evidence type="ECO:0000255" key="3"/>
<evidence type="ECO:0000312" key="4">
    <source>
        <dbReference type="EMBL" id="ABY51628.1"/>
    </source>
</evidence>